<dbReference type="EMBL" id="X56667">
    <property type="protein sequence ID" value="CAA39991.1"/>
    <property type="molecule type" value="mRNA"/>
</dbReference>
<dbReference type="EMBL" id="X56668">
    <property type="protein sequence ID" value="CAA39992.1"/>
    <property type="molecule type" value="Genomic_DNA"/>
</dbReference>
<dbReference type="EMBL" id="AK291096">
    <property type="protein sequence ID" value="BAF83785.1"/>
    <property type="molecule type" value="mRNA"/>
</dbReference>
<dbReference type="EMBL" id="AK222495">
    <property type="protein sequence ID" value="BAD96215.1"/>
    <property type="molecule type" value="mRNA"/>
</dbReference>
<dbReference type="EMBL" id="AK222648">
    <property type="protein sequence ID" value="BAD96368.1"/>
    <property type="molecule type" value="mRNA"/>
</dbReference>
<dbReference type="EMBL" id="BC015484">
    <property type="protein sequence ID" value="AAH15484.1"/>
    <property type="molecule type" value="mRNA"/>
</dbReference>
<dbReference type="CCDS" id="CCDS10899.1"/>
<dbReference type="PIR" id="S14109">
    <property type="entry name" value="A60253"/>
</dbReference>
<dbReference type="RefSeq" id="NP_001731.2">
    <property type="nucleotide sequence ID" value="NM_001740.5"/>
</dbReference>
<dbReference type="RefSeq" id="NP_009019.1">
    <property type="nucleotide sequence ID" value="NM_007088.3"/>
</dbReference>
<dbReference type="SMR" id="P22676"/>
<dbReference type="BioGRID" id="107245">
    <property type="interactions" value="10"/>
</dbReference>
<dbReference type="FunCoup" id="P22676">
    <property type="interactions" value="385"/>
</dbReference>
<dbReference type="IntAct" id="P22676">
    <property type="interactions" value="7"/>
</dbReference>
<dbReference type="STRING" id="9606.ENSP00000307508"/>
<dbReference type="DrugBank" id="DB11093">
    <property type="generic name" value="Calcium citrate"/>
</dbReference>
<dbReference type="DrugBank" id="DB13800">
    <property type="generic name" value="Calcium levulinate"/>
</dbReference>
<dbReference type="DrugBank" id="DB11348">
    <property type="generic name" value="Calcium Phosphate"/>
</dbReference>
<dbReference type="DrugBank" id="DB14481">
    <property type="generic name" value="Calcium phosphate dihydrate"/>
</dbReference>
<dbReference type="TCDB" id="8.A.82.1.2">
    <property type="family name" value="the calmodulin calcium binding protein (calmodulin) family"/>
</dbReference>
<dbReference type="iPTMnet" id="P22676"/>
<dbReference type="PhosphoSitePlus" id="P22676"/>
<dbReference type="BioMuta" id="CALB2"/>
<dbReference type="DMDM" id="109940061"/>
<dbReference type="REPRODUCTION-2DPAGE" id="IPI00027264"/>
<dbReference type="jPOST" id="P22676"/>
<dbReference type="MassIVE" id="P22676"/>
<dbReference type="PaxDb" id="9606-ENSP00000307508"/>
<dbReference type="PeptideAtlas" id="P22676"/>
<dbReference type="ProteomicsDB" id="54015"/>
<dbReference type="Pumba" id="P22676"/>
<dbReference type="ABCD" id="P22676">
    <property type="antibodies" value="2 sequenced antibodies"/>
</dbReference>
<dbReference type="Antibodypedia" id="1545">
    <property type="antibodies" value="771 antibodies from 48 providers"/>
</dbReference>
<dbReference type="DNASU" id="794"/>
<dbReference type="Ensembl" id="ENST00000302628.9">
    <property type="protein sequence ID" value="ENSP00000307508.4"/>
    <property type="gene ID" value="ENSG00000172137.19"/>
</dbReference>
<dbReference type="Ensembl" id="ENST00000635371.2">
    <property type="protein sequence ID" value="ENSP00000488916.1"/>
    <property type="gene ID" value="ENSG00000282830.2"/>
</dbReference>
<dbReference type="GeneID" id="794"/>
<dbReference type="KEGG" id="hsa:794"/>
<dbReference type="MANE-Select" id="ENST00000302628.9">
    <property type="protein sequence ID" value="ENSP00000307508.4"/>
    <property type="RefSeq nucleotide sequence ID" value="NM_001740.5"/>
    <property type="RefSeq protein sequence ID" value="NP_001731.2"/>
</dbReference>
<dbReference type="UCSC" id="uc002faa.6">
    <property type="organism name" value="human"/>
</dbReference>
<dbReference type="AGR" id="HGNC:1435"/>
<dbReference type="CTD" id="794"/>
<dbReference type="DisGeNET" id="794"/>
<dbReference type="GeneCards" id="CALB2"/>
<dbReference type="HGNC" id="HGNC:1435">
    <property type="gene designation" value="CALB2"/>
</dbReference>
<dbReference type="HPA" id="ENSG00000172137">
    <property type="expression patterns" value="Tissue enhanced (adipose tissue, brain)"/>
</dbReference>
<dbReference type="MIM" id="114051">
    <property type="type" value="gene"/>
</dbReference>
<dbReference type="neXtProt" id="NX_P22676"/>
<dbReference type="OpenTargets" id="ENSG00000172137"/>
<dbReference type="PharmGKB" id="PA26027"/>
<dbReference type="VEuPathDB" id="HostDB:ENSG00000172137"/>
<dbReference type="eggNOG" id="KOG0027">
    <property type="taxonomic scope" value="Eukaryota"/>
</dbReference>
<dbReference type="GeneTree" id="ENSGT00950000183108"/>
<dbReference type="InParanoid" id="P22676"/>
<dbReference type="OMA" id="IVLCNEP"/>
<dbReference type="OrthoDB" id="428774at2759"/>
<dbReference type="PAN-GO" id="P22676">
    <property type="GO annotations" value="8 GO annotations based on evolutionary models"/>
</dbReference>
<dbReference type="PhylomeDB" id="P22676"/>
<dbReference type="TreeFam" id="TF325083"/>
<dbReference type="PathwayCommons" id="P22676"/>
<dbReference type="SignaLink" id="P22676"/>
<dbReference type="BioGRID-ORCS" id="794">
    <property type="hits" value="9 hits in 1137 CRISPR screens"/>
</dbReference>
<dbReference type="GeneWiki" id="Calretinin"/>
<dbReference type="GenomeRNAi" id="794"/>
<dbReference type="Pharos" id="P22676">
    <property type="development level" value="Tbio"/>
</dbReference>
<dbReference type="PRO" id="PR:P22676"/>
<dbReference type="Proteomes" id="UP000005640">
    <property type="component" value="Chromosome 16"/>
</dbReference>
<dbReference type="RNAct" id="P22676">
    <property type="molecule type" value="protein"/>
</dbReference>
<dbReference type="Bgee" id="ENSG00000172137">
    <property type="expression patterns" value="Expressed in hypothalamus and 94 other cell types or tissues"/>
</dbReference>
<dbReference type="ExpressionAtlas" id="P22676">
    <property type="expression patterns" value="baseline and differential"/>
</dbReference>
<dbReference type="GO" id="GO:0032437">
    <property type="term" value="C:cuticular plate"/>
    <property type="evidence" value="ECO:0007669"/>
    <property type="project" value="Ensembl"/>
</dbReference>
<dbReference type="GO" id="GO:0005829">
    <property type="term" value="C:cytosol"/>
    <property type="evidence" value="ECO:0000314"/>
    <property type="project" value="HPA"/>
</dbReference>
<dbReference type="GO" id="GO:0044293">
    <property type="term" value="C:dendriole"/>
    <property type="evidence" value="ECO:0000250"/>
    <property type="project" value="UniProtKB"/>
</dbReference>
<dbReference type="GO" id="GO:0030425">
    <property type="term" value="C:dendrite"/>
    <property type="evidence" value="ECO:0000318"/>
    <property type="project" value="GO_Central"/>
</dbReference>
<dbReference type="GO" id="GO:0005921">
    <property type="term" value="C:gap junction"/>
    <property type="evidence" value="ECO:0007669"/>
    <property type="project" value="Ensembl"/>
</dbReference>
<dbReference type="GO" id="GO:0005634">
    <property type="term" value="C:nucleus"/>
    <property type="evidence" value="ECO:0000318"/>
    <property type="project" value="GO_Central"/>
</dbReference>
<dbReference type="GO" id="GO:0098688">
    <property type="term" value="C:parallel fiber to Purkinje cell synapse"/>
    <property type="evidence" value="ECO:0000250"/>
    <property type="project" value="UniProtKB"/>
</dbReference>
<dbReference type="GO" id="GO:0032420">
    <property type="term" value="C:stereocilium"/>
    <property type="evidence" value="ECO:0007669"/>
    <property type="project" value="Ensembl"/>
</dbReference>
<dbReference type="GO" id="GO:0045202">
    <property type="term" value="C:synapse"/>
    <property type="evidence" value="ECO:0000318"/>
    <property type="project" value="GO_Central"/>
</dbReference>
<dbReference type="GO" id="GO:0043195">
    <property type="term" value="C:terminal bouton"/>
    <property type="evidence" value="ECO:0000318"/>
    <property type="project" value="GO_Central"/>
</dbReference>
<dbReference type="GO" id="GO:0005509">
    <property type="term" value="F:calcium ion binding"/>
    <property type="evidence" value="ECO:0000318"/>
    <property type="project" value="GO_Central"/>
</dbReference>
<dbReference type="GO" id="GO:0099534">
    <property type="term" value="F:calcium ion binding involved in regulation of presynaptic cytosolic calcium ion concentration"/>
    <property type="evidence" value="ECO:0000250"/>
    <property type="project" value="UniProtKB"/>
</dbReference>
<dbReference type="GO" id="GO:0006874">
    <property type="term" value="P:intracellular calcium ion homeostasis"/>
    <property type="evidence" value="ECO:0000250"/>
    <property type="project" value="UniProtKB"/>
</dbReference>
<dbReference type="GO" id="GO:0048167">
    <property type="term" value="P:regulation of synaptic plasticity"/>
    <property type="evidence" value="ECO:0000250"/>
    <property type="project" value="UniProtKB"/>
</dbReference>
<dbReference type="GO" id="GO:0099536">
    <property type="term" value="P:synaptic signaling"/>
    <property type="evidence" value="ECO:0000250"/>
    <property type="project" value="UniProtKB"/>
</dbReference>
<dbReference type="CDD" id="cd16177">
    <property type="entry name" value="EFh_HEF_CR"/>
    <property type="match status" value="1"/>
</dbReference>
<dbReference type="FunFam" id="1.10.238.10:FF:000054">
    <property type="entry name" value="Calbindin 2"/>
    <property type="match status" value="1"/>
</dbReference>
<dbReference type="FunFam" id="1.10.238.10:FF:000165">
    <property type="entry name" value="Calbindin 2"/>
    <property type="match status" value="1"/>
</dbReference>
<dbReference type="FunFam" id="1.10.238.10:FF:000116">
    <property type="entry name" value="calretinin isoform X2"/>
    <property type="match status" value="1"/>
</dbReference>
<dbReference type="Gene3D" id="1.10.238.10">
    <property type="entry name" value="EF-hand"/>
    <property type="match status" value="3"/>
</dbReference>
<dbReference type="InterPro" id="IPR029646">
    <property type="entry name" value="CALB2"/>
</dbReference>
<dbReference type="InterPro" id="IPR051001">
    <property type="entry name" value="Calbindin_Ca-bind"/>
</dbReference>
<dbReference type="InterPro" id="IPR011992">
    <property type="entry name" value="EF-hand-dom_pair"/>
</dbReference>
<dbReference type="InterPro" id="IPR018247">
    <property type="entry name" value="EF_Hand_1_Ca_BS"/>
</dbReference>
<dbReference type="InterPro" id="IPR002048">
    <property type="entry name" value="EF_hand_dom"/>
</dbReference>
<dbReference type="PANTHER" id="PTHR19972">
    <property type="entry name" value="CALBINDIN"/>
    <property type="match status" value="1"/>
</dbReference>
<dbReference type="PANTHER" id="PTHR19972:SF4">
    <property type="entry name" value="CALRETININ"/>
    <property type="match status" value="1"/>
</dbReference>
<dbReference type="Pfam" id="PF13405">
    <property type="entry name" value="EF-hand_6"/>
    <property type="match status" value="1"/>
</dbReference>
<dbReference type="Pfam" id="PF13499">
    <property type="entry name" value="EF-hand_7"/>
    <property type="match status" value="2"/>
</dbReference>
<dbReference type="SMART" id="SM00054">
    <property type="entry name" value="EFh"/>
    <property type="match status" value="5"/>
</dbReference>
<dbReference type="SUPFAM" id="SSF47473">
    <property type="entry name" value="EF-hand"/>
    <property type="match status" value="2"/>
</dbReference>
<dbReference type="PROSITE" id="PS00018">
    <property type="entry name" value="EF_HAND_1"/>
    <property type="match status" value="5"/>
</dbReference>
<dbReference type="PROSITE" id="PS50222">
    <property type="entry name" value="EF_HAND_2"/>
    <property type="match status" value="5"/>
</dbReference>
<keyword id="KW-0106">Calcium</keyword>
<keyword id="KW-0966">Cell projection</keyword>
<keyword id="KW-0479">Metal-binding</keyword>
<keyword id="KW-0597">Phosphoprotein</keyword>
<keyword id="KW-1267">Proteomics identification</keyword>
<keyword id="KW-1185">Reference proteome</keyword>
<keyword id="KW-0677">Repeat</keyword>
<keyword id="KW-0770">Synapse</keyword>
<feature type="chain" id="PRO_0000073479" description="Calretinin">
    <location>
        <begin position="1"/>
        <end position="271"/>
    </location>
</feature>
<feature type="domain" description="EF-hand 1" evidence="3">
    <location>
        <begin position="16"/>
        <end position="51"/>
    </location>
</feature>
<feature type="domain" description="EF-hand 2" evidence="3">
    <location>
        <begin position="63"/>
        <end position="98"/>
    </location>
</feature>
<feature type="domain" description="EF-hand 3" evidence="3">
    <location>
        <begin position="107"/>
        <end position="142"/>
    </location>
</feature>
<feature type="domain" description="EF-hand 4" evidence="3">
    <location>
        <begin position="151"/>
        <end position="186"/>
    </location>
</feature>
<feature type="domain" description="EF-hand 5" evidence="3">
    <location>
        <begin position="195"/>
        <end position="230"/>
    </location>
</feature>
<feature type="domain" description="EF-hand 6" evidence="6">
    <location>
        <begin position="235"/>
        <end position="270"/>
    </location>
</feature>
<feature type="binding site" evidence="3">
    <location>
        <position position="29"/>
    </location>
    <ligand>
        <name>Ca(2+)</name>
        <dbReference type="ChEBI" id="CHEBI:29108"/>
        <label>1</label>
    </ligand>
</feature>
<feature type="binding site" evidence="3">
    <location>
        <position position="31"/>
    </location>
    <ligand>
        <name>Ca(2+)</name>
        <dbReference type="ChEBI" id="CHEBI:29108"/>
        <label>1</label>
    </ligand>
</feature>
<feature type="binding site" evidence="3">
    <location>
        <position position="33"/>
    </location>
    <ligand>
        <name>Ca(2+)</name>
        <dbReference type="ChEBI" id="CHEBI:29108"/>
        <label>1</label>
    </ligand>
</feature>
<feature type="binding site" evidence="3">
    <location>
        <position position="35"/>
    </location>
    <ligand>
        <name>Ca(2+)</name>
        <dbReference type="ChEBI" id="CHEBI:29108"/>
        <label>1</label>
    </ligand>
</feature>
<feature type="binding site" evidence="3">
    <location>
        <position position="40"/>
    </location>
    <ligand>
        <name>Ca(2+)</name>
        <dbReference type="ChEBI" id="CHEBI:29108"/>
        <label>1</label>
    </ligand>
</feature>
<feature type="binding site" evidence="3">
    <location>
        <position position="76"/>
    </location>
    <ligand>
        <name>Ca(2+)</name>
        <dbReference type="ChEBI" id="CHEBI:29108"/>
        <label>2</label>
    </ligand>
</feature>
<feature type="binding site" evidence="3">
    <location>
        <position position="78"/>
    </location>
    <ligand>
        <name>Ca(2+)</name>
        <dbReference type="ChEBI" id="CHEBI:29108"/>
        <label>2</label>
    </ligand>
</feature>
<feature type="binding site" evidence="3">
    <location>
        <position position="80"/>
    </location>
    <ligand>
        <name>Ca(2+)</name>
        <dbReference type="ChEBI" id="CHEBI:29108"/>
        <label>2</label>
    </ligand>
</feature>
<feature type="binding site" evidence="3">
    <location>
        <position position="82"/>
    </location>
    <ligand>
        <name>Ca(2+)</name>
        <dbReference type="ChEBI" id="CHEBI:29108"/>
        <label>2</label>
    </ligand>
</feature>
<feature type="binding site" evidence="3">
    <location>
        <position position="87"/>
    </location>
    <ligand>
        <name>Ca(2+)</name>
        <dbReference type="ChEBI" id="CHEBI:29108"/>
        <label>2</label>
    </ligand>
</feature>
<feature type="binding site" evidence="3">
    <location>
        <position position="120"/>
    </location>
    <ligand>
        <name>Ca(2+)</name>
        <dbReference type="ChEBI" id="CHEBI:29108"/>
        <label>3</label>
    </ligand>
</feature>
<feature type="binding site" evidence="3">
    <location>
        <position position="122"/>
    </location>
    <ligand>
        <name>Ca(2+)</name>
        <dbReference type="ChEBI" id="CHEBI:29108"/>
        <label>3</label>
    </ligand>
</feature>
<feature type="binding site" evidence="3">
    <location>
        <position position="124"/>
    </location>
    <ligand>
        <name>Ca(2+)</name>
        <dbReference type="ChEBI" id="CHEBI:29108"/>
        <label>3</label>
    </ligand>
</feature>
<feature type="binding site" evidence="3">
    <location>
        <position position="126"/>
    </location>
    <ligand>
        <name>Ca(2+)</name>
        <dbReference type="ChEBI" id="CHEBI:29108"/>
        <label>3</label>
    </ligand>
</feature>
<feature type="binding site" evidence="3">
    <location>
        <position position="131"/>
    </location>
    <ligand>
        <name>Ca(2+)</name>
        <dbReference type="ChEBI" id="CHEBI:29108"/>
        <label>3</label>
    </ligand>
</feature>
<feature type="binding site" evidence="3">
    <location>
        <position position="164"/>
    </location>
    <ligand>
        <name>Ca(2+)</name>
        <dbReference type="ChEBI" id="CHEBI:29108"/>
        <label>4</label>
    </ligand>
</feature>
<feature type="binding site" evidence="3">
    <location>
        <position position="166"/>
    </location>
    <ligand>
        <name>Ca(2+)</name>
        <dbReference type="ChEBI" id="CHEBI:29108"/>
        <label>4</label>
    </ligand>
</feature>
<feature type="binding site" evidence="3">
    <location>
        <position position="168"/>
    </location>
    <ligand>
        <name>Ca(2+)</name>
        <dbReference type="ChEBI" id="CHEBI:29108"/>
        <label>4</label>
    </ligand>
</feature>
<feature type="binding site" evidence="3">
    <location>
        <position position="170"/>
    </location>
    <ligand>
        <name>Ca(2+)</name>
        <dbReference type="ChEBI" id="CHEBI:29108"/>
        <label>4</label>
    </ligand>
</feature>
<feature type="binding site" evidence="3">
    <location>
        <position position="175"/>
    </location>
    <ligand>
        <name>Ca(2+)</name>
        <dbReference type="ChEBI" id="CHEBI:29108"/>
        <label>4</label>
    </ligand>
</feature>
<feature type="binding site" evidence="3">
    <location>
        <position position="208"/>
    </location>
    <ligand>
        <name>Ca(2+)</name>
        <dbReference type="ChEBI" id="CHEBI:29108"/>
        <label>5</label>
    </ligand>
</feature>
<feature type="binding site" evidence="3">
    <location>
        <position position="210"/>
    </location>
    <ligand>
        <name>Ca(2+)</name>
        <dbReference type="ChEBI" id="CHEBI:29108"/>
        <label>5</label>
    </ligand>
</feature>
<feature type="binding site" evidence="3">
    <location>
        <position position="212"/>
    </location>
    <ligand>
        <name>Ca(2+)</name>
        <dbReference type="ChEBI" id="CHEBI:29108"/>
        <label>5</label>
    </ligand>
</feature>
<feature type="binding site" evidence="3">
    <location>
        <position position="214"/>
    </location>
    <ligand>
        <name>Ca(2+)</name>
        <dbReference type="ChEBI" id="CHEBI:29108"/>
        <label>5</label>
    </ligand>
</feature>
<feature type="binding site" evidence="3">
    <location>
        <position position="219"/>
    </location>
    <ligand>
        <name>Ca(2+)</name>
        <dbReference type="ChEBI" id="CHEBI:29108"/>
        <label>5</label>
    </ligand>
</feature>
<feature type="modified residue" description="Phosphotyrosine" evidence="1">
    <location>
        <position position="214"/>
    </location>
</feature>
<feature type="sequence conflict" description="In Ref. 5; AAH15484." evidence="6" ref="5">
    <original>A</original>
    <variation>T</variation>
    <location>
        <position position="110"/>
    </location>
</feature>
<feature type="sequence conflict" description="In Ref. 2; CAA39991." evidence="6" ref="2">
    <original>M</original>
    <variation>I</variation>
    <location>
        <position position="235"/>
    </location>
</feature>
<reference key="1">
    <citation type="journal article" date="1989" name="Adv. Exp. Med. Biol.">
        <title>The human calbindins: cDNA and gene cloning.</title>
        <authorList>
            <person name="Parmentier M."/>
        </authorList>
    </citation>
    <scope>NUCLEOTIDE SEQUENCE [MRNA]</scope>
</reference>
<reference key="2">
    <citation type="journal article" date="1991" name="Eur. J. Biochem.">
        <title>Structure of the human brain calcium-binding protein calretinin and its expression in bacteria.</title>
        <authorList>
            <person name="Parmentier M."/>
            <person name="Lefort A."/>
        </authorList>
    </citation>
    <scope>NUCLEOTIDE SEQUENCE [GENOMIC DNA / MRNA]</scope>
</reference>
<reference key="3">
    <citation type="journal article" date="2004" name="Nat. Genet.">
        <title>Complete sequencing and characterization of 21,243 full-length human cDNAs.</title>
        <authorList>
            <person name="Ota T."/>
            <person name="Suzuki Y."/>
            <person name="Nishikawa T."/>
            <person name="Otsuki T."/>
            <person name="Sugiyama T."/>
            <person name="Irie R."/>
            <person name="Wakamatsu A."/>
            <person name="Hayashi K."/>
            <person name="Sato H."/>
            <person name="Nagai K."/>
            <person name="Kimura K."/>
            <person name="Makita H."/>
            <person name="Sekine M."/>
            <person name="Obayashi M."/>
            <person name="Nishi T."/>
            <person name="Shibahara T."/>
            <person name="Tanaka T."/>
            <person name="Ishii S."/>
            <person name="Yamamoto J."/>
            <person name="Saito K."/>
            <person name="Kawai Y."/>
            <person name="Isono Y."/>
            <person name="Nakamura Y."/>
            <person name="Nagahari K."/>
            <person name="Murakami K."/>
            <person name="Yasuda T."/>
            <person name="Iwayanagi T."/>
            <person name="Wagatsuma M."/>
            <person name="Shiratori A."/>
            <person name="Sudo H."/>
            <person name="Hosoiri T."/>
            <person name="Kaku Y."/>
            <person name="Kodaira H."/>
            <person name="Kondo H."/>
            <person name="Sugawara M."/>
            <person name="Takahashi M."/>
            <person name="Kanda K."/>
            <person name="Yokoi T."/>
            <person name="Furuya T."/>
            <person name="Kikkawa E."/>
            <person name="Omura Y."/>
            <person name="Abe K."/>
            <person name="Kamihara K."/>
            <person name="Katsuta N."/>
            <person name="Sato K."/>
            <person name="Tanikawa M."/>
            <person name="Yamazaki M."/>
            <person name="Ninomiya K."/>
            <person name="Ishibashi T."/>
            <person name="Yamashita H."/>
            <person name="Murakawa K."/>
            <person name="Fujimori K."/>
            <person name="Tanai H."/>
            <person name="Kimata M."/>
            <person name="Watanabe M."/>
            <person name="Hiraoka S."/>
            <person name="Chiba Y."/>
            <person name="Ishida S."/>
            <person name="Ono Y."/>
            <person name="Takiguchi S."/>
            <person name="Watanabe S."/>
            <person name="Yosida M."/>
            <person name="Hotuta T."/>
            <person name="Kusano J."/>
            <person name="Kanehori K."/>
            <person name="Takahashi-Fujii A."/>
            <person name="Hara H."/>
            <person name="Tanase T.-O."/>
            <person name="Nomura Y."/>
            <person name="Togiya S."/>
            <person name="Komai F."/>
            <person name="Hara R."/>
            <person name="Takeuchi K."/>
            <person name="Arita M."/>
            <person name="Imose N."/>
            <person name="Musashino K."/>
            <person name="Yuuki H."/>
            <person name="Oshima A."/>
            <person name="Sasaki N."/>
            <person name="Aotsuka S."/>
            <person name="Yoshikawa Y."/>
            <person name="Matsunawa H."/>
            <person name="Ichihara T."/>
            <person name="Shiohata N."/>
            <person name="Sano S."/>
            <person name="Moriya S."/>
            <person name="Momiyama H."/>
            <person name="Satoh N."/>
            <person name="Takami S."/>
            <person name="Terashima Y."/>
            <person name="Suzuki O."/>
            <person name="Nakagawa S."/>
            <person name="Senoh A."/>
            <person name="Mizoguchi H."/>
            <person name="Goto Y."/>
            <person name="Shimizu F."/>
            <person name="Wakebe H."/>
            <person name="Hishigaki H."/>
            <person name="Watanabe T."/>
            <person name="Sugiyama A."/>
            <person name="Takemoto M."/>
            <person name="Kawakami B."/>
            <person name="Yamazaki M."/>
            <person name="Watanabe K."/>
            <person name="Kumagai A."/>
            <person name="Itakura S."/>
            <person name="Fukuzumi Y."/>
            <person name="Fujimori Y."/>
            <person name="Komiyama M."/>
            <person name="Tashiro H."/>
            <person name="Tanigami A."/>
            <person name="Fujiwara T."/>
            <person name="Ono T."/>
            <person name="Yamada K."/>
            <person name="Fujii Y."/>
            <person name="Ozaki K."/>
            <person name="Hirao M."/>
            <person name="Ohmori Y."/>
            <person name="Kawabata A."/>
            <person name="Hikiji T."/>
            <person name="Kobatake N."/>
            <person name="Inagaki H."/>
            <person name="Ikema Y."/>
            <person name="Okamoto S."/>
            <person name="Okitani R."/>
            <person name="Kawakami T."/>
            <person name="Noguchi S."/>
            <person name="Itoh T."/>
            <person name="Shigeta K."/>
            <person name="Senba T."/>
            <person name="Matsumura K."/>
            <person name="Nakajima Y."/>
            <person name="Mizuno T."/>
            <person name="Morinaga M."/>
            <person name="Sasaki M."/>
            <person name="Togashi T."/>
            <person name="Oyama M."/>
            <person name="Hata H."/>
            <person name="Watanabe M."/>
            <person name="Komatsu T."/>
            <person name="Mizushima-Sugano J."/>
            <person name="Satoh T."/>
            <person name="Shirai Y."/>
            <person name="Takahashi Y."/>
            <person name="Nakagawa K."/>
            <person name="Okumura K."/>
            <person name="Nagase T."/>
            <person name="Nomura N."/>
            <person name="Kikuchi H."/>
            <person name="Masuho Y."/>
            <person name="Yamashita R."/>
            <person name="Nakai K."/>
            <person name="Yada T."/>
            <person name="Nakamura Y."/>
            <person name="Ohara O."/>
            <person name="Isogai T."/>
            <person name="Sugano S."/>
        </authorList>
    </citation>
    <scope>NUCLEOTIDE SEQUENCE [LARGE SCALE MRNA]</scope>
</reference>
<reference key="4">
    <citation type="submission" date="2005-04" db="EMBL/GenBank/DDBJ databases">
        <authorList>
            <person name="Suzuki Y."/>
            <person name="Sugano S."/>
            <person name="Totoki Y."/>
            <person name="Toyoda A."/>
            <person name="Takeda T."/>
            <person name="Sakaki Y."/>
            <person name="Tanaka A."/>
            <person name="Yokoyama S."/>
        </authorList>
    </citation>
    <scope>NUCLEOTIDE SEQUENCE [LARGE SCALE MRNA]</scope>
    <source>
        <tissue>Adipose tissue</tissue>
        <tissue>Cerebellum</tissue>
    </source>
</reference>
<reference key="5">
    <citation type="journal article" date="2004" name="Genome Res.">
        <title>The status, quality, and expansion of the NIH full-length cDNA project: the Mammalian Gene Collection (MGC).</title>
        <authorList>
            <consortium name="The MGC Project Team"/>
        </authorList>
    </citation>
    <scope>NUCLEOTIDE SEQUENCE [LARGE SCALE MRNA]</scope>
    <source>
        <tissue>Colon</tissue>
    </source>
</reference>
<reference key="6">
    <citation type="journal article" date="2004" name="J. Physiol. (Lond.)">
        <title>Spatiotemporal patterning of IP3-mediated Ca2+ signals in Xenopus oocytes by Ca2+-binding proteins.</title>
        <authorList>
            <person name="Dargan S.L."/>
            <person name="Schwaller B."/>
            <person name="Parker I."/>
        </authorList>
    </citation>
    <scope>FUNCTION</scope>
    <scope>CALCIUM-BINDING</scope>
</reference>
<proteinExistence type="evidence at protein level"/>
<evidence type="ECO:0000250" key="1">
    <source>
        <dbReference type="UniProtKB" id="P47728"/>
    </source>
</evidence>
<evidence type="ECO:0000250" key="2">
    <source>
        <dbReference type="UniProtKB" id="Q08331"/>
    </source>
</evidence>
<evidence type="ECO:0000255" key="3">
    <source>
        <dbReference type="PROSITE-ProRule" id="PRU00448"/>
    </source>
</evidence>
<evidence type="ECO:0000269" key="4">
    <source>
    </source>
</evidence>
<evidence type="ECO:0000303" key="5">
    <source>
    </source>
</evidence>
<evidence type="ECO:0000305" key="6"/>
<evidence type="ECO:0000312" key="7">
    <source>
        <dbReference type="HGNC" id="HGNC:1435"/>
    </source>
</evidence>
<gene>
    <name evidence="7" type="primary">CALB2</name>
    <name type="synonym">CAB29</name>
</gene>
<comment type="function">
    <text evidence="1 2 4">Calcium-binding protein involved in calcium homeostasis and signal transduction. It plays a critical role in buffering intracellular calcium levels and modulating calcium-dependent signaling pathways (PubMed:2001709). Predominantly expressed in specific neuronal populations, influences synaptic plasticity and neuronal excitability, contributing to learning and memory (By similarity). During embryonic development, it facilitates neuronal differentiation and maturation (By similarity).</text>
</comment>
<comment type="subcellular location">
    <subcellularLocation>
        <location evidence="2">Synapse</location>
    </subcellularLocation>
    <subcellularLocation>
        <location evidence="2">Cell projection</location>
        <location evidence="2">Dendrite</location>
    </subcellularLocation>
    <text evidence="2">Located in dendrioles, small dendrites that makes up a brush structure found as the terminal specialization of a dendrite of a unipolar brush cell.</text>
</comment>
<comment type="tissue specificity">
    <text>Brain.</text>
</comment>
<comment type="similarity">
    <text evidence="6">Belongs to the calbindin family.</text>
</comment>
<comment type="online information" name="Wikipedia">
    <link uri="https://en.wikipedia.org/wiki/Calbindin"/>
    <text>Calbindin entry</text>
</comment>
<protein>
    <recommendedName>
        <fullName evidence="6">Calretinin</fullName>
        <shortName evidence="5">CR</shortName>
    </recommendedName>
    <alternativeName>
        <fullName>29 kDa calbindin</fullName>
    </alternativeName>
</protein>
<organism>
    <name type="scientific">Homo sapiens</name>
    <name type="common">Human</name>
    <dbReference type="NCBI Taxonomy" id="9606"/>
    <lineage>
        <taxon>Eukaryota</taxon>
        <taxon>Metazoa</taxon>
        <taxon>Chordata</taxon>
        <taxon>Craniata</taxon>
        <taxon>Vertebrata</taxon>
        <taxon>Euteleostomi</taxon>
        <taxon>Mammalia</taxon>
        <taxon>Eutheria</taxon>
        <taxon>Euarchontoglires</taxon>
        <taxon>Primates</taxon>
        <taxon>Haplorrhini</taxon>
        <taxon>Catarrhini</taxon>
        <taxon>Hominidae</taxon>
        <taxon>Homo</taxon>
    </lineage>
</organism>
<name>CALB2_HUMAN</name>
<accession>P22676</accession>
<accession>A8K4Y1</accession>
<accession>Q53HD2</accession>
<accession>Q96BK4</accession>
<sequence>MAGPQQQPPYLHLAELTASQFLEIWKHFDADGNGYIEGKELENFFQELEKARKGSGMMSKSDNFGEKMKEFMQKYDKNSDGKIEMAELAQILPTEENFLLCFRQHVGSSAEFMEAWRKYDTDRSGYIEANELKGFLSDLLKKANRPYDEPKLQEYTQTILRMFDLNGDGKLGLSEMSRLLPVQENFLLKFQGMKLTSEEFNAIFTFYDKDRSGYIDEHELDALLKDLYEKNKKEMNIQQLTNYRKSVMSLAEAGKLYRKDLEIVLCSEPPM</sequence>